<comment type="miscellaneous">
    <text>Open reading frame exhibits genomic organization compatible with a translational readthrough-dependent mode of expression.</text>
</comment>
<name>BSC1_YEAST</name>
<evidence type="ECO:0000255" key="1">
    <source>
        <dbReference type="PROSITE-ProRule" id="PRU01168"/>
    </source>
</evidence>
<evidence type="ECO:0000256" key="2">
    <source>
        <dbReference type="SAM" id="MobiDB-lite"/>
    </source>
</evidence>
<keyword id="KW-1185">Reference proteome</keyword>
<reference key="1">
    <citation type="journal article" date="1997" name="Yeast">
        <title>The sequence of a 36.7 kb segment on the left arm of chromosome IV from Saccharomyces cerevisiae reveals 20 non-overlapping open reading frames (ORFs) including SIT4, FAD1, NAM1, RNA11, SIR2, NAT1, PRP9, ACT2 and MPS1 and 11 new ORFs.</title>
        <authorList>
            <person name="Saren A.-M."/>
            <person name="Laamanen P."/>
            <person name="Lejarcegui J.B."/>
            <person name="Paulin L."/>
        </authorList>
    </citation>
    <scope>NUCLEOTIDE SEQUENCE [LARGE SCALE GENOMIC DNA]</scope>
    <source>
        <strain>ATCC 204508 / S288c</strain>
    </source>
</reference>
<reference key="2">
    <citation type="journal article" date="2014" name="G3 (Bethesda)">
        <title>The reference genome sequence of Saccharomyces cerevisiae: Then and now.</title>
        <authorList>
            <person name="Engel S.R."/>
            <person name="Dietrich F.S."/>
            <person name="Fisk D.G."/>
            <person name="Binkley G."/>
            <person name="Balakrishnan R."/>
            <person name="Costanzo M.C."/>
            <person name="Dwight S.S."/>
            <person name="Hitz B.C."/>
            <person name="Karra K."/>
            <person name="Nash R.S."/>
            <person name="Weng S."/>
            <person name="Wong E.D."/>
            <person name="Lloyd P."/>
            <person name="Skrzypek M.S."/>
            <person name="Miyasato S.R."/>
            <person name="Simison M."/>
            <person name="Cherry J.M."/>
        </authorList>
    </citation>
    <scope>GENOME REANNOTATION</scope>
    <source>
        <strain>ATCC 204508 / S288c</strain>
    </source>
</reference>
<reference key="3">
    <citation type="journal article" date="1997" name="Nature">
        <title>The nucleotide sequence of Saccharomyces cerevisiae chromosome IV.</title>
        <authorList>
            <person name="Jacq C."/>
            <person name="Alt-Moerbe J."/>
            <person name="Andre B."/>
            <person name="Arnold W."/>
            <person name="Bahr A."/>
            <person name="Ballesta J.P.G."/>
            <person name="Bargues M."/>
            <person name="Baron L."/>
            <person name="Becker A."/>
            <person name="Biteau N."/>
            <person name="Bloecker H."/>
            <person name="Blugeon C."/>
            <person name="Boskovic J."/>
            <person name="Brandt P."/>
            <person name="Brueckner M."/>
            <person name="Buitrago M.J."/>
            <person name="Coster F."/>
            <person name="Delaveau T."/>
            <person name="del Rey F."/>
            <person name="Dujon B."/>
            <person name="Eide L.G."/>
            <person name="Garcia-Cantalejo J.M."/>
            <person name="Goffeau A."/>
            <person name="Gomez-Peris A."/>
            <person name="Granotier C."/>
            <person name="Hanemann V."/>
            <person name="Hankeln T."/>
            <person name="Hoheisel J.D."/>
            <person name="Jaeger W."/>
            <person name="Jimenez A."/>
            <person name="Jonniaux J.-L."/>
            <person name="Kraemer C."/>
            <person name="Kuester H."/>
            <person name="Laamanen P."/>
            <person name="Legros Y."/>
            <person name="Louis E.J."/>
            <person name="Moeller-Rieker S."/>
            <person name="Monnet A."/>
            <person name="Moro M."/>
            <person name="Mueller-Auer S."/>
            <person name="Nussbaumer B."/>
            <person name="Paricio N."/>
            <person name="Paulin L."/>
            <person name="Perea J."/>
            <person name="Perez-Alonso M."/>
            <person name="Perez-Ortin J.E."/>
            <person name="Pohl T.M."/>
            <person name="Prydz H."/>
            <person name="Purnelle B."/>
            <person name="Rasmussen S.W."/>
            <person name="Remacha M.A."/>
            <person name="Revuelta J.L."/>
            <person name="Rieger M."/>
            <person name="Salom D."/>
            <person name="Saluz H.P."/>
            <person name="Saiz J.E."/>
            <person name="Saren A.-M."/>
            <person name="Schaefer M."/>
            <person name="Scharfe M."/>
            <person name="Schmidt E.R."/>
            <person name="Schneider C."/>
            <person name="Scholler P."/>
            <person name="Schwarz S."/>
            <person name="Soler-Mira A."/>
            <person name="Urrestarazu L.A."/>
            <person name="Verhasselt P."/>
            <person name="Vissers S."/>
            <person name="Voet M."/>
            <person name="Volckaert G."/>
            <person name="Wagner G."/>
            <person name="Wambutt R."/>
            <person name="Wedler E."/>
            <person name="Wedler H."/>
            <person name="Woelfl S."/>
            <person name="Harris D.E."/>
            <person name="Bowman S."/>
            <person name="Brown D."/>
            <person name="Churcher C.M."/>
            <person name="Connor R."/>
            <person name="Dedman K."/>
            <person name="Gentles S."/>
            <person name="Hamlin N."/>
            <person name="Hunt S."/>
            <person name="Jones L."/>
            <person name="McDonald S."/>
            <person name="Murphy L.D."/>
            <person name="Niblett D."/>
            <person name="Odell C."/>
            <person name="Oliver K."/>
            <person name="Rajandream M.A."/>
            <person name="Richards C."/>
            <person name="Shore L."/>
            <person name="Walsh S.V."/>
            <person name="Barrell B.G."/>
            <person name="Dietrich F.S."/>
            <person name="Mulligan J.T."/>
            <person name="Allen E."/>
            <person name="Araujo R."/>
            <person name="Aviles E."/>
            <person name="Berno A."/>
            <person name="Carpenter J."/>
            <person name="Chen E."/>
            <person name="Cherry J.M."/>
            <person name="Chung E."/>
            <person name="Duncan M."/>
            <person name="Hunicke-Smith S."/>
            <person name="Hyman R.W."/>
            <person name="Komp C."/>
            <person name="Lashkari D."/>
            <person name="Lew H."/>
            <person name="Lin D."/>
            <person name="Mosedale D."/>
            <person name="Nakahara K."/>
            <person name="Namath A."/>
            <person name="Oefner P."/>
            <person name="Oh C."/>
            <person name="Petel F.X."/>
            <person name="Roberts D."/>
            <person name="Schramm S."/>
            <person name="Schroeder M."/>
            <person name="Shogren T."/>
            <person name="Shroff N."/>
            <person name="Winant A."/>
            <person name="Yelton M.A."/>
            <person name="Botstein D."/>
            <person name="Davis R.W."/>
            <person name="Johnston M."/>
            <person name="Andrews S."/>
            <person name="Brinkman R."/>
            <person name="Cooper J."/>
            <person name="Ding H."/>
            <person name="Du Z."/>
            <person name="Favello A."/>
            <person name="Fulton L."/>
            <person name="Gattung S."/>
            <person name="Greco T."/>
            <person name="Hallsworth K."/>
            <person name="Hawkins J."/>
            <person name="Hillier L.W."/>
            <person name="Jier M."/>
            <person name="Johnson D."/>
            <person name="Johnston L."/>
            <person name="Kirsten J."/>
            <person name="Kucaba T."/>
            <person name="Langston Y."/>
            <person name="Latreille P."/>
            <person name="Le T."/>
            <person name="Mardis E."/>
            <person name="Menezes S."/>
            <person name="Miller N."/>
            <person name="Nhan M."/>
            <person name="Pauley A."/>
            <person name="Peluso D."/>
            <person name="Rifkin L."/>
            <person name="Riles L."/>
            <person name="Taich A."/>
            <person name="Trevaskis E."/>
            <person name="Vignati D."/>
            <person name="Wilcox L."/>
            <person name="Wohldman P."/>
            <person name="Vaudin M."/>
            <person name="Wilson R."/>
            <person name="Waterston R."/>
            <person name="Albermann K."/>
            <person name="Hani J."/>
            <person name="Heumann K."/>
            <person name="Kleine K."/>
            <person name="Mewes H.-W."/>
            <person name="Zollner A."/>
            <person name="Zaccaria P."/>
        </authorList>
    </citation>
    <scope>NUCLEOTIDE SEQUENCE [LARGE SCALE GENOMIC DNA]</scope>
    <source>
        <strain>ATCC 204508 / S288c</strain>
    </source>
</reference>
<reference key="4">
    <citation type="journal article" date="2003" name="Nucleic Acids Res.">
        <title>Identification of stop codon readthrough genes in Saccharomyces cerevisiae.</title>
        <authorList>
            <person name="Namy O."/>
            <person name="Duchateau-Nguyen G."/>
            <person name="Hatin I."/>
            <person name="Hermann-Le Denmat S."/>
            <person name="Termier M."/>
            <person name="Rousset J.-P."/>
        </authorList>
    </citation>
    <scope>GENE NAME</scope>
</reference>
<protein>
    <recommendedName>
        <fullName>Bypass of stop codon protein 1</fullName>
    </recommendedName>
</protein>
<dbReference type="EMBL" id="Z71781">
    <property type="protein sequence ID" value="CAA96452.1"/>
    <property type="molecule type" value="Genomic_DNA"/>
</dbReference>
<dbReference type="EMBL" id="Z74085">
    <property type="protein sequence ID" value="CAA98596.1"/>
    <property type="molecule type" value="Genomic_DNA"/>
</dbReference>
<dbReference type="EMBL" id="BK006938">
    <property type="protein sequence ID" value="DAA11817.1"/>
    <property type="molecule type" value="Genomic_DNA"/>
</dbReference>
<dbReference type="PIR" id="S67570">
    <property type="entry name" value="S67570"/>
</dbReference>
<dbReference type="RefSeq" id="NP_010247.1">
    <property type="nucleotide sequence ID" value="NM_001180096.1"/>
</dbReference>
<dbReference type="SMR" id="Q12140"/>
<dbReference type="BioGRID" id="32021">
    <property type="interactions" value="53"/>
</dbReference>
<dbReference type="DIP" id="DIP-5600N"/>
<dbReference type="FunCoup" id="Q12140">
    <property type="interactions" value="80"/>
</dbReference>
<dbReference type="IntAct" id="Q12140">
    <property type="interactions" value="1"/>
</dbReference>
<dbReference type="MINT" id="Q12140"/>
<dbReference type="STRING" id="4932.YDL037C"/>
<dbReference type="PaxDb" id="4932-YDL037C"/>
<dbReference type="EnsemblFungi" id="YDL037C_mRNA">
    <property type="protein sequence ID" value="YDL037C"/>
    <property type="gene ID" value="YDL037C"/>
</dbReference>
<dbReference type="GeneID" id="851524"/>
<dbReference type="KEGG" id="sce:YDL037C"/>
<dbReference type="AGR" id="SGD:S000002195"/>
<dbReference type="SGD" id="S000002195">
    <property type="gene designation" value="BSC1"/>
</dbReference>
<dbReference type="VEuPathDB" id="FungiDB:YDL037C"/>
<dbReference type="eggNOG" id="ENOG502S1H2">
    <property type="taxonomic scope" value="Eukaryota"/>
</dbReference>
<dbReference type="GeneTree" id="ENSGT00940000176775"/>
<dbReference type="HOGENOM" id="CLU_070636_0_0_1"/>
<dbReference type="InParanoid" id="Q12140"/>
<dbReference type="OMA" id="NILHYDM"/>
<dbReference type="OrthoDB" id="4070545at2759"/>
<dbReference type="BioCyc" id="YEAST:G3O-29461-MONOMER"/>
<dbReference type="BioGRID-ORCS" id="851524">
    <property type="hits" value="10 hits in 10 CRISPR screens"/>
</dbReference>
<dbReference type="PRO" id="PR:Q12140"/>
<dbReference type="Proteomes" id="UP000002311">
    <property type="component" value="Chromosome IV"/>
</dbReference>
<dbReference type="RNAct" id="Q12140">
    <property type="molecule type" value="protein"/>
</dbReference>
<dbReference type="InterPro" id="IPR018789">
    <property type="entry name" value="Flo11"/>
</dbReference>
<dbReference type="InterPro" id="IPR052881">
    <property type="entry name" value="Keratinocyte_PR"/>
</dbReference>
<dbReference type="PANTHER" id="PTHR48138:SF2">
    <property type="entry name" value="KERATINOCYTE PROLINE-RICH PROTEIN"/>
    <property type="match status" value="1"/>
</dbReference>
<dbReference type="PANTHER" id="PTHR48138">
    <property type="entry name" value="KERATINOCYTE PROLINE-RICH PROTEIN-RELATED"/>
    <property type="match status" value="1"/>
</dbReference>
<dbReference type="Pfam" id="PF10182">
    <property type="entry name" value="Flo11"/>
    <property type="match status" value="1"/>
</dbReference>
<dbReference type="SMART" id="SM01213">
    <property type="entry name" value="Flo11"/>
    <property type="match status" value="1"/>
</dbReference>
<dbReference type="PROSITE" id="PS51824">
    <property type="entry name" value="FLO11"/>
    <property type="match status" value="1"/>
</dbReference>
<gene>
    <name type="primary">BSC1</name>
    <name type="ordered locus">YDL037C</name>
    <name type="ORF">D2734</name>
</gene>
<sequence>MSQQNILHYDMDVTSVSWVKDNTYQITIHVKAVKDIPLKYLWSLKIIGVNGPSSTVQLYGKNEKTYLISDPTDFTSTFQVYAYPSSDGCTVWMPNFQIQFEYLQGDAAQYWQTWQWGTTTFDLSTGCNNYDNQGHSQTDFPGFYWTYQCKGNNDGTCTKASSSSITTSSITTSSTTTSSTTTSSTTTSSSTTSSSTTSSSTTSSSTTSSSTTSSSTTSSSTTSSSTTSSSTTSSSTTSSSTTSSSTKTSTTTSSTVKSSSTTSIDFTTSVDSHTSSSVADIYRSRTSTDVTTLAASTSPFSSFTSSDSSSSSDVTSSTIQTTSVDPTT</sequence>
<accession>Q12140</accession>
<accession>D6VRV7</accession>
<feature type="chain" id="PRO_0000064992" description="Bypass of stop codon protein 1">
    <location>
        <begin position="1"/>
        <end position="328"/>
    </location>
</feature>
<feature type="domain" description="Flo11" evidence="1">
    <location>
        <begin position="1"/>
        <end position="155"/>
    </location>
</feature>
<feature type="region of interest" description="Disordered" evidence="2">
    <location>
        <begin position="168"/>
        <end position="259"/>
    </location>
</feature>
<feature type="region of interest" description="Disordered" evidence="2">
    <location>
        <begin position="286"/>
        <end position="328"/>
    </location>
</feature>
<feature type="compositionally biased region" description="Low complexity" evidence="2">
    <location>
        <begin position="291"/>
        <end position="328"/>
    </location>
</feature>
<organism>
    <name type="scientific">Saccharomyces cerevisiae (strain ATCC 204508 / S288c)</name>
    <name type="common">Baker's yeast</name>
    <dbReference type="NCBI Taxonomy" id="559292"/>
    <lineage>
        <taxon>Eukaryota</taxon>
        <taxon>Fungi</taxon>
        <taxon>Dikarya</taxon>
        <taxon>Ascomycota</taxon>
        <taxon>Saccharomycotina</taxon>
        <taxon>Saccharomycetes</taxon>
        <taxon>Saccharomycetales</taxon>
        <taxon>Saccharomycetaceae</taxon>
        <taxon>Saccharomyces</taxon>
    </lineage>
</organism>
<proteinExistence type="predicted"/>